<accession>Q1J8H6</accession>
<dbReference type="EC" id="3.6.1.27" evidence="1"/>
<dbReference type="EMBL" id="CP000262">
    <property type="protein sequence ID" value="ABF37185.1"/>
    <property type="molecule type" value="Genomic_DNA"/>
</dbReference>
<dbReference type="SMR" id="Q1J8H6"/>
<dbReference type="KEGG" id="spi:MGAS10750_Spy0235"/>
<dbReference type="HOGENOM" id="CLU_060296_2_0_9"/>
<dbReference type="Proteomes" id="UP000002434">
    <property type="component" value="Chromosome"/>
</dbReference>
<dbReference type="GO" id="GO:0005886">
    <property type="term" value="C:plasma membrane"/>
    <property type="evidence" value="ECO:0007669"/>
    <property type="project" value="UniProtKB-SubCell"/>
</dbReference>
<dbReference type="GO" id="GO:0050380">
    <property type="term" value="F:undecaprenyl-diphosphatase activity"/>
    <property type="evidence" value="ECO:0007669"/>
    <property type="project" value="UniProtKB-UniRule"/>
</dbReference>
<dbReference type="GO" id="GO:0071555">
    <property type="term" value="P:cell wall organization"/>
    <property type="evidence" value="ECO:0007669"/>
    <property type="project" value="UniProtKB-KW"/>
</dbReference>
<dbReference type="GO" id="GO:0009252">
    <property type="term" value="P:peptidoglycan biosynthetic process"/>
    <property type="evidence" value="ECO:0007669"/>
    <property type="project" value="UniProtKB-KW"/>
</dbReference>
<dbReference type="GO" id="GO:0008360">
    <property type="term" value="P:regulation of cell shape"/>
    <property type="evidence" value="ECO:0007669"/>
    <property type="project" value="UniProtKB-KW"/>
</dbReference>
<dbReference type="GO" id="GO:0046677">
    <property type="term" value="P:response to antibiotic"/>
    <property type="evidence" value="ECO:0007669"/>
    <property type="project" value="UniProtKB-UniRule"/>
</dbReference>
<dbReference type="HAMAP" id="MF_01006">
    <property type="entry name" value="Undec_diphosphatase"/>
    <property type="match status" value="1"/>
</dbReference>
<dbReference type="InterPro" id="IPR003824">
    <property type="entry name" value="UppP"/>
</dbReference>
<dbReference type="NCBIfam" id="NF001391">
    <property type="entry name" value="PRK00281.1-5"/>
    <property type="match status" value="1"/>
</dbReference>
<dbReference type="PANTHER" id="PTHR30622">
    <property type="entry name" value="UNDECAPRENYL-DIPHOSPHATASE"/>
    <property type="match status" value="1"/>
</dbReference>
<dbReference type="PANTHER" id="PTHR30622:SF3">
    <property type="entry name" value="UNDECAPRENYL-DIPHOSPHATASE"/>
    <property type="match status" value="1"/>
</dbReference>
<dbReference type="Pfam" id="PF02673">
    <property type="entry name" value="BacA"/>
    <property type="match status" value="1"/>
</dbReference>
<gene>
    <name evidence="1" type="primary">uppP</name>
    <name type="synonym">bacA</name>
    <name type="ordered locus">MGAS10750_Spy0235</name>
</gene>
<sequence>MLIIELLKAIFFGIIEGITEWLPVSSTGHLILVQEFIRLNQDKAFIEMFNIVIQLGAIIAVMLIYFERLNPFQPGKTAREVQLTWQLWLKVVIACIPSILIAVPLDNWFEAHFYFMVPIAIALIVYGIAFIWIEKQNAQQEPAVTDLARMSYKTAFFIGCFQVLSIVPGTSRSGATILGAIILGTSRTVAADFTFFLAIPTMFGYSGLKAVKFFLDGHHLDFAQVLILLVASLTAFVVSLLAIRFLTDYVKKHDFTIFGKYRIVLGSLLLIYSFFKFVF</sequence>
<proteinExistence type="inferred from homology"/>
<comment type="function">
    <text evidence="1">Catalyzes the dephosphorylation of undecaprenyl diphosphate (UPP). Confers resistance to bacitracin.</text>
</comment>
<comment type="catalytic activity">
    <reaction evidence="1">
        <text>di-trans,octa-cis-undecaprenyl diphosphate + H2O = di-trans,octa-cis-undecaprenyl phosphate + phosphate + H(+)</text>
        <dbReference type="Rhea" id="RHEA:28094"/>
        <dbReference type="ChEBI" id="CHEBI:15377"/>
        <dbReference type="ChEBI" id="CHEBI:15378"/>
        <dbReference type="ChEBI" id="CHEBI:43474"/>
        <dbReference type="ChEBI" id="CHEBI:58405"/>
        <dbReference type="ChEBI" id="CHEBI:60392"/>
        <dbReference type="EC" id="3.6.1.27"/>
    </reaction>
</comment>
<comment type="subcellular location">
    <subcellularLocation>
        <location evidence="1">Cell membrane</location>
        <topology evidence="1">Multi-pass membrane protein</topology>
    </subcellularLocation>
</comment>
<comment type="miscellaneous">
    <text>Bacitracin is thought to be involved in the inhibition of peptidoglycan synthesis by sequestering undecaprenyl diphosphate, thereby reducing the pool of lipid carrier available.</text>
</comment>
<comment type="similarity">
    <text evidence="1">Belongs to the UppP family.</text>
</comment>
<protein>
    <recommendedName>
        <fullName evidence="1">Undecaprenyl-diphosphatase</fullName>
        <ecNumber evidence="1">3.6.1.27</ecNumber>
    </recommendedName>
    <alternativeName>
        <fullName evidence="1">Bacitracin resistance protein</fullName>
    </alternativeName>
    <alternativeName>
        <fullName evidence="1">Undecaprenyl pyrophosphate phosphatase</fullName>
    </alternativeName>
</protein>
<keyword id="KW-0046">Antibiotic resistance</keyword>
<keyword id="KW-1003">Cell membrane</keyword>
<keyword id="KW-0133">Cell shape</keyword>
<keyword id="KW-0961">Cell wall biogenesis/degradation</keyword>
<keyword id="KW-0378">Hydrolase</keyword>
<keyword id="KW-0472">Membrane</keyword>
<keyword id="KW-0573">Peptidoglycan synthesis</keyword>
<keyword id="KW-0812">Transmembrane</keyword>
<keyword id="KW-1133">Transmembrane helix</keyword>
<organism>
    <name type="scientific">Streptococcus pyogenes serotype M4 (strain MGAS10750)</name>
    <dbReference type="NCBI Taxonomy" id="370554"/>
    <lineage>
        <taxon>Bacteria</taxon>
        <taxon>Bacillati</taxon>
        <taxon>Bacillota</taxon>
        <taxon>Bacilli</taxon>
        <taxon>Lactobacillales</taxon>
        <taxon>Streptococcaceae</taxon>
        <taxon>Streptococcus</taxon>
    </lineage>
</organism>
<reference key="1">
    <citation type="journal article" date="2006" name="Proc. Natl. Acad. Sci. U.S.A.">
        <title>Molecular genetic anatomy of inter- and intraserotype variation in the human bacterial pathogen group A Streptococcus.</title>
        <authorList>
            <person name="Beres S.B."/>
            <person name="Richter E.W."/>
            <person name="Nagiec M.J."/>
            <person name="Sumby P."/>
            <person name="Porcella S.F."/>
            <person name="DeLeo F.R."/>
            <person name="Musser J.M."/>
        </authorList>
    </citation>
    <scope>NUCLEOTIDE SEQUENCE [LARGE SCALE GENOMIC DNA]</scope>
    <source>
        <strain>MGAS10750</strain>
    </source>
</reference>
<feature type="chain" id="PRO_0000250271" description="Undecaprenyl-diphosphatase">
    <location>
        <begin position="1"/>
        <end position="279"/>
    </location>
</feature>
<feature type="transmembrane region" description="Helical" evidence="1">
    <location>
        <begin position="2"/>
        <end position="22"/>
    </location>
</feature>
<feature type="transmembrane region" description="Helical" evidence="1">
    <location>
        <begin position="44"/>
        <end position="64"/>
    </location>
</feature>
<feature type="transmembrane region" description="Helical" evidence="1">
    <location>
        <begin position="85"/>
        <end position="105"/>
    </location>
</feature>
<feature type="transmembrane region" description="Helical" evidence="1">
    <location>
        <begin position="113"/>
        <end position="133"/>
    </location>
</feature>
<feature type="transmembrane region" description="Helical" evidence="1">
    <location>
        <begin position="163"/>
        <end position="183"/>
    </location>
</feature>
<feature type="transmembrane region" description="Helical" evidence="1">
    <location>
        <begin position="188"/>
        <end position="208"/>
    </location>
</feature>
<feature type="transmembrane region" description="Helical" evidence="1">
    <location>
        <begin position="223"/>
        <end position="243"/>
    </location>
</feature>
<feature type="transmembrane region" description="Helical" evidence="1">
    <location>
        <begin position="255"/>
        <end position="275"/>
    </location>
</feature>
<name>UPPP_STRPF</name>
<evidence type="ECO:0000255" key="1">
    <source>
        <dbReference type="HAMAP-Rule" id="MF_01006"/>
    </source>
</evidence>